<reference key="1">
    <citation type="journal article" date="2007" name="J. Virol.">
        <title>Identification of novel rodent herpesviruses, including the first gammaherpesvirus of Mus musculus.</title>
        <authorList>
            <person name="Ehlers B."/>
            <person name="Kuchler J."/>
            <person name="Yasmum N."/>
            <person name="Dural G."/>
            <person name="Voigt S."/>
            <person name="Schmidt-Chanasit J."/>
            <person name="Jakel T."/>
            <person name="Matuschka F.R."/>
            <person name="Richter D."/>
            <person name="Essbauer S."/>
            <person name="Hughes D.J."/>
            <person name="Summers C."/>
            <person name="Bennett M."/>
            <person name="Stewart J.P."/>
            <person name="Ulrich R.G."/>
        </authorList>
    </citation>
    <scope>NUCLEOTIDE SEQUENCE [GENOMIC DNA]</scope>
</reference>
<reference key="2">
    <citation type="journal article" date="2001" name="J. Gen. Virol.">
        <title>Genetic and ultrastructural characterization of a European isolate of the fatal endotheliotropic elephant herpesvirus.</title>
        <authorList>
            <person name="Ehlers B."/>
            <person name="Burkhardt S."/>
            <person name="Goltz M."/>
            <person name="Bergmann V."/>
            <person name="Ochs A."/>
            <person name="Weiler H."/>
            <person name="Hentschke J."/>
        </authorList>
    </citation>
    <scope>NUCLEOTIDE SEQUENCE [GENOMIC DNA]</scope>
</reference>
<feature type="chain" id="PRO_0000408170" description="Protein U58">
    <location>
        <begin position="1"/>
        <end position="796"/>
    </location>
</feature>
<name>UL87_ELHVK</name>
<accession>Q18LD9</accession>
<dbReference type="EMBL" id="AF322977">
    <property type="protein sequence ID" value="ABG36580.1"/>
    <property type="molecule type" value="Genomic_DNA"/>
</dbReference>
<dbReference type="InterPro" id="IPR004285">
    <property type="entry name" value="Herpes_UL87_C"/>
</dbReference>
<dbReference type="InterPro" id="IPR007618">
    <property type="entry name" value="Herpes_UL87_N"/>
</dbReference>
<dbReference type="Pfam" id="PF04532">
    <property type="entry name" value="DUF587"/>
    <property type="match status" value="1"/>
</dbReference>
<dbReference type="Pfam" id="PF03043">
    <property type="entry name" value="Herpes_UL87"/>
    <property type="match status" value="1"/>
</dbReference>
<comment type="similarity">
    <text evidence="1">Belongs to the herpesviridae UL87 family.</text>
</comment>
<protein>
    <recommendedName>
        <fullName>Protein U58</fullName>
    </recommendedName>
</protein>
<organismHost>
    <name type="scientific">Elephas maximus</name>
    <name type="common">Indian elephant</name>
    <dbReference type="NCBI Taxonomy" id="9783"/>
</organismHost>
<organismHost>
    <name type="scientific">Loxodonta africana</name>
    <name type="common">African elephant</name>
    <dbReference type="NCBI Taxonomy" id="9785"/>
</organismHost>
<organismHost>
    <name type="scientific">Loxodonta cyclotis</name>
    <name type="common">African forest elephant</name>
    <dbReference type="NCBI Taxonomy" id="99490"/>
</organismHost>
<organism>
    <name type="scientific">Elephantid herpesvirus 1 (isolate Asian elephant/Berlin/Kiba/1998)</name>
    <name type="common">EIHV-1</name>
    <name type="synonym">Elephant endotheliotropic herpesvirus</name>
    <dbReference type="NCBI Taxonomy" id="654902"/>
    <lineage>
        <taxon>Viruses</taxon>
        <taxon>Duplodnaviria</taxon>
        <taxon>Heunggongvirae</taxon>
        <taxon>Peploviricota</taxon>
        <taxon>Herviviricetes</taxon>
        <taxon>Herpesvirales</taxon>
        <taxon>Orthoherpesviridae</taxon>
        <taxon>Betaherpesvirinae</taxon>
        <taxon>Proboscivirus</taxon>
        <taxon>Proboscivirus elephantidbeta1</taxon>
        <taxon>Elephantid herpesvirus 1</taxon>
    </lineage>
</organism>
<evidence type="ECO:0000305" key="1"/>
<sequence>MNIQHKEDTLIVQTGGNYKYYSVPVCVDSIDLTTEIARSEEKLLTGPSKHVEDPSYIESLFKNLYLNAPEYLKCQERCFLILKRLLLGPTSVPCAVETWDKMDYMNENPITTQNGTLYVYKKCCKCPNNCLFNCTVLTNYGTSHVFRGLLSLKKWETDTEPMICFCNRAVPNSEYIAVIFPGEQKITLDMYPHLLNILTRYISICDIDTITNDLIIELGSSLTNRICIHYKFLFNYAYIAKDSFTFVPDMDKEVILLELNKLIMTVECCTNFFFEKIWKRLSGDYDKYVTLLTLDASACPIIQTGTMREIKHLAAMLNVGLSYGKQKILKCSLQFQKRFIGFSEDDVIWRNLFLIYFNVNYPHHEETSPVKVPVQSSVKYHILLQRLLKNKRADEHETIVDRFVCGGMLNKRSTESYGTWDRNVETSVPDEFNEVVTIRDDAFCVNAFNTNRVINVRSINKKHVTTAPSCLTFNFVTDKYIFKEPACTISTFGTSGNTLQSLNINMKGSYVEFIYMLNVYRLHTNTFKFLLPATVCNSNSSLDIHGLLNQEVMRSDRNAVFWTTNFPCMITNINKINMGWFKAATAIVPKVHGDELRTVIKKEINFLKTSPSVNFDPFLHNMFVELELRNRCQIPLMNKQLVLTLYICLCMSNKCEISGIQKYLMTLVSEGVFDYSKNMLAHTKVKHVCAIAGSRVCNNVPKILHNKKKVKLDSFGRNANLLTFFGHLNVNELTDRQLSTIVKILIFYVQNIKHRGGICLLKRIIRKFLNSRVNKKLNGYDCRNNSTNNEHCRYPT</sequence>
<proteinExistence type="inferred from homology"/>